<keyword id="KW-1064">Adaptive immunity</keyword>
<keyword id="KW-0025">Alternative splicing</keyword>
<keyword id="KW-1003">Cell membrane</keyword>
<keyword id="KW-0391">Immunity</keyword>
<keyword id="KW-0472">Membrane</keyword>
<keyword id="KW-0597">Phosphoprotein</keyword>
<keyword id="KW-1267">Proteomics identification</keyword>
<keyword id="KW-1185">Reference proteome</keyword>
<keyword id="KW-0735">Signal-anchor</keyword>
<keyword id="KW-0812">Transmembrane</keyword>
<keyword id="KW-1133">Transmembrane helix</keyword>
<proteinExistence type="evidence at protein level"/>
<sequence>MDGVTPTLSTIRGRTLESSTLHVTPRSLDRNKDQITNIFSGFAGLLAILLVVAVFCILWNWNKRKKRQVPYLRVTVMPLLTLPQTRQRAKNIYDILPWRQEDLGRHESRSMRIFSTESLLSRNSESPEHVPSQAGNAFQEHTAHIHATEYAVGIYDNAMVPQMCGNLTPSAHCINVRASRDCASISSEDSHDYVNVPTAEEIAETLASTKSPSRNLFVLPSTQKLEFTEERDEGCGDAGDCTSLYSPGAEDSDSLSNGEGSSQISNDYVNMTGLDLSAIQERQLWVAFQCCRDYENVPAADPSGSQQQAEKDVPSSNIGHVEDKTDDPGTHVQCVKRTFLASGDYADFQPFTQSEDSQMKHREEMSNEDSSDYENVLTAKLGGRDSEQGPGTQLLPDE</sequence>
<reference key="1">
    <citation type="journal article" date="2002" name="J. Biol. Chem.">
        <title>Molecular cloning of a novel gene encoding a membrane-associated adaptor protein (LAX) in lymphocyte signaling.</title>
        <authorList>
            <person name="Zhu M."/>
            <person name="Janssen E."/>
            <person name="Leung K."/>
            <person name="Zhang W."/>
        </authorList>
    </citation>
    <scope>NUCLEOTIDE SEQUENCE [MRNA] (ISOFORM 1)</scope>
    <scope>TISSUE SPECIFICITY</scope>
    <scope>SUBCELLULAR LOCATION</scope>
    <scope>INTERACTION WITH GRB2; PIK3R1 AND GRAP2</scope>
    <scope>PHOSPHORYLATION AT TYR-193; TYR-268; TYR-294 AND TYR-373</scope>
    <scope>FUNCTION</scope>
</reference>
<reference key="2">
    <citation type="journal article" date="2004" name="Nat. Genet.">
        <title>Complete sequencing and characterization of 21,243 full-length human cDNAs.</title>
        <authorList>
            <person name="Ota T."/>
            <person name="Suzuki Y."/>
            <person name="Nishikawa T."/>
            <person name="Otsuki T."/>
            <person name="Sugiyama T."/>
            <person name="Irie R."/>
            <person name="Wakamatsu A."/>
            <person name="Hayashi K."/>
            <person name="Sato H."/>
            <person name="Nagai K."/>
            <person name="Kimura K."/>
            <person name="Makita H."/>
            <person name="Sekine M."/>
            <person name="Obayashi M."/>
            <person name="Nishi T."/>
            <person name="Shibahara T."/>
            <person name="Tanaka T."/>
            <person name="Ishii S."/>
            <person name="Yamamoto J."/>
            <person name="Saito K."/>
            <person name="Kawai Y."/>
            <person name="Isono Y."/>
            <person name="Nakamura Y."/>
            <person name="Nagahari K."/>
            <person name="Murakami K."/>
            <person name="Yasuda T."/>
            <person name="Iwayanagi T."/>
            <person name="Wagatsuma M."/>
            <person name="Shiratori A."/>
            <person name="Sudo H."/>
            <person name="Hosoiri T."/>
            <person name="Kaku Y."/>
            <person name="Kodaira H."/>
            <person name="Kondo H."/>
            <person name="Sugawara M."/>
            <person name="Takahashi M."/>
            <person name="Kanda K."/>
            <person name="Yokoi T."/>
            <person name="Furuya T."/>
            <person name="Kikkawa E."/>
            <person name="Omura Y."/>
            <person name="Abe K."/>
            <person name="Kamihara K."/>
            <person name="Katsuta N."/>
            <person name="Sato K."/>
            <person name="Tanikawa M."/>
            <person name="Yamazaki M."/>
            <person name="Ninomiya K."/>
            <person name="Ishibashi T."/>
            <person name="Yamashita H."/>
            <person name="Murakawa K."/>
            <person name="Fujimori K."/>
            <person name="Tanai H."/>
            <person name="Kimata M."/>
            <person name="Watanabe M."/>
            <person name="Hiraoka S."/>
            <person name="Chiba Y."/>
            <person name="Ishida S."/>
            <person name="Ono Y."/>
            <person name="Takiguchi S."/>
            <person name="Watanabe S."/>
            <person name="Yosida M."/>
            <person name="Hotuta T."/>
            <person name="Kusano J."/>
            <person name="Kanehori K."/>
            <person name="Takahashi-Fujii A."/>
            <person name="Hara H."/>
            <person name="Tanase T.-O."/>
            <person name="Nomura Y."/>
            <person name="Togiya S."/>
            <person name="Komai F."/>
            <person name="Hara R."/>
            <person name="Takeuchi K."/>
            <person name="Arita M."/>
            <person name="Imose N."/>
            <person name="Musashino K."/>
            <person name="Yuuki H."/>
            <person name="Oshima A."/>
            <person name="Sasaki N."/>
            <person name="Aotsuka S."/>
            <person name="Yoshikawa Y."/>
            <person name="Matsunawa H."/>
            <person name="Ichihara T."/>
            <person name="Shiohata N."/>
            <person name="Sano S."/>
            <person name="Moriya S."/>
            <person name="Momiyama H."/>
            <person name="Satoh N."/>
            <person name="Takami S."/>
            <person name="Terashima Y."/>
            <person name="Suzuki O."/>
            <person name="Nakagawa S."/>
            <person name="Senoh A."/>
            <person name="Mizoguchi H."/>
            <person name="Goto Y."/>
            <person name="Shimizu F."/>
            <person name="Wakebe H."/>
            <person name="Hishigaki H."/>
            <person name="Watanabe T."/>
            <person name="Sugiyama A."/>
            <person name="Takemoto M."/>
            <person name="Kawakami B."/>
            <person name="Yamazaki M."/>
            <person name="Watanabe K."/>
            <person name="Kumagai A."/>
            <person name="Itakura S."/>
            <person name="Fukuzumi Y."/>
            <person name="Fujimori Y."/>
            <person name="Komiyama M."/>
            <person name="Tashiro H."/>
            <person name="Tanigami A."/>
            <person name="Fujiwara T."/>
            <person name="Ono T."/>
            <person name="Yamada K."/>
            <person name="Fujii Y."/>
            <person name="Ozaki K."/>
            <person name="Hirao M."/>
            <person name="Ohmori Y."/>
            <person name="Kawabata A."/>
            <person name="Hikiji T."/>
            <person name="Kobatake N."/>
            <person name="Inagaki H."/>
            <person name="Ikema Y."/>
            <person name="Okamoto S."/>
            <person name="Okitani R."/>
            <person name="Kawakami T."/>
            <person name="Noguchi S."/>
            <person name="Itoh T."/>
            <person name="Shigeta K."/>
            <person name="Senba T."/>
            <person name="Matsumura K."/>
            <person name="Nakajima Y."/>
            <person name="Mizuno T."/>
            <person name="Morinaga M."/>
            <person name="Sasaki M."/>
            <person name="Togashi T."/>
            <person name="Oyama M."/>
            <person name="Hata H."/>
            <person name="Watanabe M."/>
            <person name="Komatsu T."/>
            <person name="Mizushima-Sugano J."/>
            <person name="Satoh T."/>
            <person name="Shirai Y."/>
            <person name="Takahashi Y."/>
            <person name="Nakagawa K."/>
            <person name="Okumura K."/>
            <person name="Nagase T."/>
            <person name="Nomura N."/>
            <person name="Kikuchi H."/>
            <person name="Masuho Y."/>
            <person name="Yamashita R."/>
            <person name="Nakai K."/>
            <person name="Yada T."/>
            <person name="Nakamura Y."/>
            <person name="Ohara O."/>
            <person name="Isogai T."/>
            <person name="Sugano S."/>
        </authorList>
    </citation>
    <scope>NUCLEOTIDE SEQUENCE [LARGE SCALE MRNA] (ISOFORMS 2 AND 3)</scope>
</reference>
<reference key="3">
    <citation type="journal article" date="2006" name="Nature">
        <title>The DNA sequence and biological annotation of human chromosome 1.</title>
        <authorList>
            <person name="Gregory S.G."/>
            <person name="Barlow K.F."/>
            <person name="McLay K.E."/>
            <person name="Kaul R."/>
            <person name="Swarbreck D."/>
            <person name="Dunham A."/>
            <person name="Scott C.E."/>
            <person name="Howe K.L."/>
            <person name="Woodfine K."/>
            <person name="Spencer C.C.A."/>
            <person name="Jones M.C."/>
            <person name="Gillson C."/>
            <person name="Searle S."/>
            <person name="Zhou Y."/>
            <person name="Kokocinski F."/>
            <person name="McDonald L."/>
            <person name="Evans R."/>
            <person name="Phillips K."/>
            <person name="Atkinson A."/>
            <person name="Cooper R."/>
            <person name="Jones C."/>
            <person name="Hall R.E."/>
            <person name="Andrews T.D."/>
            <person name="Lloyd C."/>
            <person name="Ainscough R."/>
            <person name="Almeida J.P."/>
            <person name="Ambrose K.D."/>
            <person name="Anderson F."/>
            <person name="Andrew R.W."/>
            <person name="Ashwell R.I.S."/>
            <person name="Aubin K."/>
            <person name="Babbage A.K."/>
            <person name="Bagguley C.L."/>
            <person name="Bailey J."/>
            <person name="Beasley H."/>
            <person name="Bethel G."/>
            <person name="Bird C.P."/>
            <person name="Bray-Allen S."/>
            <person name="Brown J.Y."/>
            <person name="Brown A.J."/>
            <person name="Buckley D."/>
            <person name="Burton J."/>
            <person name="Bye J."/>
            <person name="Carder C."/>
            <person name="Chapman J.C."/>
            <person name="Clark S.Y."/>
            <person name="Clarke G."/>
            <person name="Clee C."/>
            <person name="Cobley V."/>
            <person name="Collier R.E."/>
            <person name="Corby N."/>
            <person name="Coville G.J."/>
            <person name="Davies J."/>
            <person name="Deadman R."/>
            <person name="Dunn M."/>
            <person name="Earthrowl M."/>
            <person name="Ellington A.G."/>
            <person name="Errington H."/>
            <person name="Frankish A."/>
            <person name="Frankland J."/>
            <person name="French L."/>
            <person name="Garner P."/>
            <person name="Garnett J."/>
            <person name="Gay L."/>
            <person name="Ghori M.R.J."/>
            <person name="Gibson R."/>
            <person name="Gilby L.M."/>
            <person name="Gillett W."/>
            <person name="Glithero R.J."/>
            <person name="Grafham D.V."/>
            <person name="Griffiths C."/>
            <person name="Griffiths-Jones S."/>
            <person name="Grocock R."/>
            <person name="Hammond S."/>
            <person name="Harrison E.S.I."/>
            <person name="Hart E."/>
            <person name="Haugen E."/>
            <person name="Heath P.D."/>
            <person name="Holmes S."/>
            <person name="Holt K."/>
            <person name="Howden P.J."/>
            <person name="Hunt A.R."/>
            <person name="Hunt S.E."/>
            <person name="Hunter G."/>
            <person name="Isherwood J."/>
            <person name="James R."/>
            <person name="Johnson C."/>
            <person name="Johnson D."/>
            <person name="Joy A."/>
            <person name="Kay M."/>
            <person name="Kershaw J.K."/>
            <person name="Kibukawa M."/>
            <person name="Kimberley A.M."/>
            <person name="King A."/>
            <person name="Knights A.J."/>
            <person name="Lad H."/>
            <person name="Laird G."/>
            <person name="Lawlor S."/>
            <person name="Leongamornlert D.A."/>
            <person name="Lloyd D.M."/>
            <person name="Loveland J."/>
            <person name="Lovell J."/>
            <person name="Lush M.J."/>
            <person name="Lyne R."/>
            <person name="Martin S."/>
            <person name="Mashreghi-Mohammadi M."/>
            <person name="Matthews L."/>
            <person name="Matthews N.S.W."/>
            <person name="McLaren S."/>
            <person name="Milne S."/>
            <person name="Mistry S."/>
            <person name="Moore M.J.F."/>
            <person name="Nickerson T."/>
            <person name="O'Dell C.N."/>
            <person name="Oliver K."/>
            <person name="Palmeiri A."/>
            <person name="Palmer S.A."/>
            <person name="Parker A."/>
            <person name="Patel D."/>
            <person name="Pearce A.V."/>
            <person name="Peck A.I."/>
            <person name="Pelan S."/>
            <person name="Phelps K."/>
            <person name="Phillimore B.J."/>
            <person name="Plumb R."/>
            <person name="Rajan J."/>
            <person name="Raymond C."/>
            <person name="Rouse G."/>
            <person name="Saenphimmachak C."/>
            <person name="Sehra H.K."/>
            <person name="Sheridan E."/>
            <person name="Shownkeen R."/>
            <person name="Sims S."/>
            <person name="Skuce C.D."/>
            <person name="Smith M."/>
            <person name="Steward C."/>
            <person name="Subramanian S."/>
            <person name="Sycamore N."/>
            <person name="Tracey A."/>
            <person name="Tromans A."/>
            <person name="Van Helmond Z."/>
            <person name="Wall M."/>
            <person name="Wallis J.M."/>
            <person name="White S."/>
            <person name="Whitehead S.L."/>
            <person name="Wilkinson J.E."/>
            <person name="Willey D.L."/>
            <person name="Williams H."/>
            <person name="Wilming L."/>
            <person name="Wray P.W."/>
            <person name="Wu Z."/>
            <person name="Coulson A."/>
            <person name="Vaudin M."/>
            <person name="Sulston J.E."/>
            <person name="Durbin R.M."/>
            <person name="Hubbard T."/>
            <person name="Wooster R."/>
            <person name="Dunham I."/>
            <person name="Carter N.P."/>
            <person name="McVean G."/>
            <person name="Ross M.T."/>
            <person name="Harrow J."/>
            <person name="Olson M.V."/>
            <person name="Beck S."/>
            <person name="Rogers J."/>
            <person name="Bentley D.R."/>
        </authorList>
    </citation>
    <scope>NUCLEOTIDE SEQUENCE [LARGE SCALE GENOMIC DNA]</scope>
</reference>
<reference key="4">
    <citation type="submission" date="2005-07" db="EMBL/GenBank/DDBJ databases">
        <authorList>
            <person name="Mural R.J."/>
            <person name="Istrail S."/>
            <person name="Sutton G.G."/>
            <person name="Florea L."/>
            <person name="Halpern A.L."/>
            <person name="Mobarry C.M."/>
            <person name="Lippert R."/>
            <person name="Walenz B."/>
            <person name="Shatkay H."/>
            <person name="Dew I."/>
            <person name="Miller J.R."/>
            <person name="Flanigan M.J."/>
            <person name="Edwards N.J."/>
            <person name="Bolanos R."/>
            <person name="Fasulo D."/>
            <person name="Halldorsson B.V."/>
            <person name="Hannenhalli S."/>
            <person name="Turner R."/>
            <person name="Yooseph S."/>
            <person name="Lu F."/>
            <person name="Nusskern D.R."/>
            <person name="Shue B.C."/>
            <person name="Zheng X.H."/>
            <person name="Zhong F."/>
            <person name="Delcher A.L."/>
            <person name="Huson D.H."/>
            <person name="Kravitz S.A."/>
            <person name="Mouchard L."/>
            <person name="Reinert K."/>
            <person name="Remington K.A."/>
            <person name="Clark A.G."/>
            <person name="Waterman M.S."/>
            <person name="Eichler E.E."/>
            <person name="Adams M.D."/>
            <person name="Hunkapiller M.W."/>
            <person name="Myers E.W."/>
            <person name="Venter J.C."/>
        </authorList>
    </citation>
    <scope>NUCLEOTIDE SEQUENCE [LARGE SCALE GENOMIC DNA]</scope>
</reference>
<reference key="5">
    <citation type="journal article" date="2004" name="Genome Res.">
        <title>The status, quality, and expansion of the NIH full-length cDNA project: the Mammalian Gene Collection (MGC).</title>
        <authorList>
            <consortium name="The MGC Project Team"/>
        </authorList>
    </citation>
    <scope>NUCLEOTIDE SEQUENCE [LARGE SCALE MRNA] (ISOFORM 1)</scope>
    <source>
        <tissue>Lymph</tissue>
    </source>
</reference>
<reference key="6">
    <citation type="journal article" date="2005" name="J. Immunol.">
        <title>Negative regulation of lymphocyte activation by the adaptor protein LAX.</title>
        <authorList>
            <person name="Zhu M."/>
            <person name="Granillo O."/>
            <person name="Wen R."/>
            <person name="Yang K."/>
            <person name="Dai X."/>
            <person name="Wang D."/>
            <person name="Zhang W."/>
        </authorList>
    </citation>
    <scope>INDUCTION</scope>
</reference>
<reference key="7">
    <citation type="journal article" date="2009" name="Sci. Signal.">
        <title>Quantitative phosphoproteomic analysis of T cell receptor signaling reveals system-wide modulation of protein-protein interactions.</title>
        <authorList>
            <person name="Mayya V."/>
            <person name="Lundgren D.H."/>
            <person name="Hwang S.-I."/>
            <person name="Rezaul K."/>
            <person name="Wu L."/>
            <person name="Eng J.K."/>
            <person name="Rodionov V."/>
            <person name="Han D.K."/>
        </authorList>
    </citation>
    <scope>PHOSPHORYLATION [LARGE SCALE ANALYSIS] AT TYR-345 AND TYR-373</scope>
    <scope>IDENTIFICATION BY MASS SPECTROMETRY [LARGE SCALE ANALYSIS]</scope>
    <source>
        <tissue>Leukemic T-cell</tissue>
    </source>
</reference>
<organism>
    <name type="scientific">Homo sapiens</name>
    <name type="common">Human</name>
    <dbReference type="NCBI Taxonomy" id="9606"/>
    <lineage>
        <taxon>Eukaryota</taxon>
        <taxon>Metazoa</taxon>
        <taxon>Chordata</taxon>
        <taxon>Craniata</taxon>
        <taxon>Vertebrata</taxon>
        <taxon>Euteleostomi</taxon>
        <taxon>Mammalia</taxon>
        <taxon>Eutheria</taxon>
        <taxon>Euarchontoglires</taxon>
        <taxon>Primates</taxon>
        <taxon>Haplorrhini</taxon>
        <taxon>Catarrhini</taxon>
        <taxon>Hominidae</taxon>
        <taxon>Homo</taxon>
    </lineage>
</organism>
<feature type="chain" id="PRO_0000083329" description="Lymphocyte transmembrane adapter 1">
    <location>
        <begin position="1"/>
        <end position="398"/>
    </location>
</feature>
<feature type="topological domain" description="Extracellular" evidence="1">
    <location>
        <begin position="1"/>
        <end position="37"/>
    </location>
</feature>
<feature type="transmembrane region" description="Helical; Signal-anchor for type III membrane protein" evidence="1">
    <location>
        <begin position="38"/>
        <end position="58"/>
    </location>
</feature>
<feature type="topological domain" description="Cytoplasmic" evidence="1">
    <location>
        <begin position="59"/>
        <end position="398"/>
    </location>
</feature>
<feature type="region of interest" description="Disordered" evidence="2">
    <location>
        <begin position="228"/>
        <end position="261"/>
    </location>
</feature>
<feature type="region of interest" description="Disordered" evidence="2">
    <location>
        <begin position="298"/>
        <end position="330"/>
    </location>
</feature>
<feature type="region of interest" description="Disordered" evidence="2">
    <location>
        <begin position="347"/>
        <end position="398"/>
    </location>
</feature>
<feature type="compositionally biased region" description="Polar residues" evidence="2">
    <location>
        <begin position="303"/>
        <end position="318"/>
    </location>
</feature>
<feature type="compositionally biased region" description="Basic and acidic residues" evidence="2">
    <location>
        <begin position="320"/>
        <end position="329"/>
    </location>
</feature>
<feature type="modified residue" description="Phosphotyrosine" evidence="3">
    <location>
        <position position="193"/>
    </location>
</feature>
<feature type="modified residue" description="Phosphotyrosine" evidence="3">
    <location>
        <position position="268"/>
    </location>
</feature>
<feature type="modified residue" description="Phosphotyrosine" evidence="3">
    <location>
        <position position="294"/>
    </location>
</feature>
<feature type="modified residue" description="Phosphotyrosine" evidence="7">
    <location>
        <position position="345"/>
    </location>
</feature>
<feature type="modified residue" description="Phosphotyrosine" evidence="3 7">
    <location>
        <position position="373"/>
    </location>
</feature>
<feature type="splice variant" id="VSP_016641" description="In isoform 2." evidence="5">
    <location>
        <begin position="1"/>
        <end position="76"/>
    </location>
</feature>
<feature type="splice variant" id="VSP_046972" description="In isoform 3." evidence="5">
    <original>MDGVTPTLSTIRGRTLESSTLHVTPRSLD</original>
    <variation>MRSHFLQWALATS</variation>
    <location>
        <begin position="1"/>
        <end position="29"/>
    </location>
</feature>
<feature type="sequence conflict" description="In Ref. 2; BAA91101." evidence="6" ref="2">
    <original>V</original>
    <variation>A</variation>
    <location>
        <position position="152"/>
    </location>
</feature>
<feature type="sequence conflict" description="In Ref. 2; BAA91101." evidence="6" ref="2">
    <original>I</original>
    <variation>V</variation>
    <location>
        <position position="185"/>
    </location>
</feature>
<feature type="sequence conflict" description="In Ref. 2; BAH13480." evidence="6" ref="2">
    <original>H</original>
    <variation>R</variation>
    <location>
        <position position="320"/>
    </location>
</feature>
<dbReference type="EMBL" id="AY090784">
    <property type="protein sequence ID" value="AAM09818.1"/>
    <property type="molecule type" value="mRNA"/>
</dbReference>
<dbReference type="EMBL" id="AK000347">
    <property type="protein sequence ID" value="BAA91101.1"/>
    <property type="molecule type" value="mRNA"/>
</dbReference>
<dbReference type="EMBL" id="AK301421">
    <property type="protein sequence ID" value="BAH13480.1"/>
    <property type="molecule type" value="mRNA"/>
</dbReference>
<dbReference type="EMBL" id="AC114402">
    <property type="status" value="NOT_ANNOTATED_CDS"/>
    <property type="molecule type" value="Genomic_DNA"/>
</dbReference>
<dbReference type="EMBL" id="CH471067">
    <property type="protein sequence ID" value="EAW91491.1"/>
    <property type="molecule type" value="Genomic_DNA"/>
</dbReference>
<dbReference type="EMBL" id="BC069650">
    <property type="protein sequence ID" value="AAH69650.1"/>
    <property type="status" value="ALT_INIT"/>
    <property type="molecule type" value="mRNA"/>
</dbReference>
<dbReference type="EMBL" id="BC089408">
    <property type="protein sequence ID" value="AAH89408.1"/>
    <property type="molecule type" value="mRNA"/>
</dbReference>
<dbReference type="CCDS" id="CCDS1441.2">
    <molecule id="Q8IWV1-1"/>
</dbReference>
<dbReference type="CCDS" id="CCDS44297.1">
    <molecule id="Q8IWV1-3"/>
</dbReference>
<dbReference type="RefSeq" id="NP_001129662.1">
    <molecule id="Q8IWV1-3"/>
    <property type="nucleotide sequence ID" value="NM_001136190.2"/>
</dbReference>
<dbReference type="RefSeq" id="NP_001269807.1">
    <molecule id="Q8IWV1-2"/>
    <property type="nucleotide sequence ID" value="NM_001282878.1"/>
</dbReference>
<dbReference type="RefSeq" id="NP_060243.2">
    <molecule id="Q8IWV1-1"/>
    <property type="nucleotide sequence ID" value="NM_017773.4"/>
</dbReference>
<dbReference type="RefSeq" id="XP_006711460.1">
    <molecule id="Q8IWV1-1"/>
    <property type="nucleotide sequence ID" value="XM_006711397.4"/>
</dbReference>
<dbReference type="RefSeq" id="XP_054193230.1">
    <molecule id="Q8IWV1-1"/>
    <property type="nucleotide sequence ID" value="XM_054337255.1"/>
</dbReference>
<dbReference type="BioGRID" id="120246">
    <property type="interactions" value="8"/>
</dbReference>
<dbReference type="FunCoup" id="Q8IWV1">
    <property type="interactions" value="212"/>
</dbReference>
<dbReference type="IntAct" id="Q8IWV1">
    <property type="interactions" value="8"/>
</dbReference>
<dbReference type="MINT" id="Q8IWV1"/>
<dbReference type="STRING" id="9606.ENSP00000406970"/>
<dbReference type="iPTMnet" id="Q8IWV1"/>
<dbReference type="PhosphoSitePlus" id="Q8IWV1"/>
<dbReference type="BioMuta" id="LAX1"/>
<dbReference type="DMDM" id="74728197"/>
<dbReference type="CPTAC" id="CPTAC-1761"/>
<dbReference type="MassIVE" id="Q8IWV1"/>
<dbReference type="PaxDb" id="9606-ENSP00000406970"/>
<dbReference type="PeptideAtlas" id="Q8IWV1"/>
<dbReference type="ProteomicsDB" id="70902">
    <molecule id="Q8IWV1-1"/>
</dbReference>
<dbReference type="ProteomicsDB" id="70903">
    <molecule id="Q8IWV1-2"/>
</dbReference>
<dbReference type="Antibodypedia" id="1184">
    <property type="antibodies" value="241 antibodies from 29 providers"/>
</dbReference>
<dbReference type="DNASU" id="54900"/>
<dbReference type="Ensembl" id="ENST00000367217.6">
    <molecule id="Q8IWV1-3"/>
    <property type="protein sequence ID" value="ENSP00000356186.5"/>
    <property type="gene ID" value="ENSG00000122188.14"/>
</dbReference>
<dbReference type="Ensembl" id="ENST00000442561.7">
    <molecule id="Q8IWV1-1"/>
    <property type="protein sequence ID" value="ENSP00000406970.2"/>
    <property type="gene ID" value="ENSG00000122188.14"/>
</dbReference>
<dbReference type="GeneID" id="54900"/>
<dbReference type="KEGG" id="hsa:54900"/>
<dbReference type="MANE-Select" id="ENST00000442561.7">
    <property type="protein sequence ID" value="ENSP00000406970.2"/>
    <property type="RefSeq nucleotide sequence ID" value="NM_017773.4"/>
    <property type="RefSeq protein sequence ID" value="NP_060243.2"/>
</dbReference>
<dbReference type="UCSC" id="uc001haa.4">
    <molecule id="Q8IWV1-1"/>
    <property type="organism name" value="human"/>
</dbReference>
<dbReference type="AGR" id="HGNC:26005"/>
<dbReference type="CTD" id="54900"/>
<dbReference type="DisGeNET" id="54900"/>
<dbReference type="GeneCards" id="LAX1"/>
<dbReference type="HGNC" id="HGNC:26005">
    <property type="gene designation" value="LAX1"/>
</dbReference>
<dbReference type="HPA" id="ENSG00000122188">
    <property type="expression patterns" value="Tissue enriched (lymphoid)"/>
</dbReference>
<dbReference type="MIM" id="619622">
    <property type="type" value="gene"/>
</dbReference>
<dbReference type="neXtProt" id="NX_Q8IWV1"/>
<dbReference type="OpenTargets" id="ENSG00000122188"/>
<dbReference type="PharmGKB" id="PA142671569"/>
<dbReference type="VEuPathDB" id="HostDB:ENSG00000122188"/>
<dbReference type="eggNOG" id="ENOG502SP30">
    <property type="taxonomic scope" value="Eukaryota"/>
</dbReference>
<dbReference type="GeneTree" id="ENSGT00390000014063"/>
<dbReference type="HOGENOM" id="CLU_058345_0_0_1"/>
<dbReference type="InParanoid" id="Q8IWV1"/>
<dbReference type="OMA" id="RDYINVP"/>
<dbReference type="OrthoDB" id="9449526at2759"/>
<dbReference type="PAN-GO" id="Q8IWV1">
    <property type="GO annotations" value="6 GO annotations based on evolutionary models"/>
</dbReference>
<dbReference type="PhylomeDB" id="Q8IWV1"/>
<dbReference type="TreeFam" id="TF337411"/>
<dbReference type="PathwayCommons" id="Q8IWV1"/>
<dbReference type="SignaLink" id="Q8IWV1"/>
<dbReference type="SIGNOR" id="Q8IWV1"/>
<dbReference type="BioGRID-ORCS" id="54900">
    <property type="hits" value="16 hits in 1149 CRISPR screens"/>
</dbReference>
<dbReference type="ChiTaRS" id="LAX1">
    <property type="organism name" value="human"/>
</dbReference>
<dbReference type="GenomeRNAi" id="54900"/>
<dbReference type="Pharos" id="Q8IWV1">
    <property type="development level" value="Tbio"/>
</dbReference>
<dbReference type="PRO" id="PR:Q8IWV1"/>
<dbReference type="Proteomes" id="UP000005640">
    <property type="component" value="Chromosome 1"/>
</dbReference>
<dbReference type="RNAct" id="Q8IWV1">
    <property type="molecule type" value="protein"/>
</dbReference>
<dbReference type="Bgee" id="ENSG00000122188">
    <property type="expression patterns" value="Expressed in lymph node and 111 other cell types or tissues"/>
</dbReference>
<dbReference type="GO" id="GO:0005829">
    <property type="term" value="C:cytosol"/>
    <property type="evidence" value="ECO:0000314"/>
    <property type="project" value="HPA"/>
</dbReference>
<dbReference type="GO" id="GO:0005794">
    <property type="term" value="C:Golgi apparatus"/>
    <property type="evidence" value="ECO:0000314"/>
    <property type="project" value="HPA"/>
</dbReference>
<dbReference type="GO" id="GO:0016020">
    <property type="term" value="C:membrane"/>
    <property type="evidence" value="ECO:0000314"/>
    <property type="project" value="HGNC-UCL"/>
</dbReference>
<dbReference type="GO" id="GO:0005886">
    <property type="term" value="C:plasma membrane"/>
    <property type="evidence" value="ECO:0000314"/>
    <property type="project" value="HPA"/>
</dbReference>
<dbReference type="GO" id="GO:0019901">
    <property type="term" value="F:protein kinase binding"/>
    <property type="evidence" value="ECO:0000314"/>
    <property type="project" value="HGNC-UCL"/>
</dbReference>
<dbReference type="GO" id="GO:0042169">
    <property type="term" value="F:SH2 domain binding"/>
    <property type="evidence" value="ECO:0000314"/>
    <property type="project" value="HGNC-UCL"/>
</dbReference>
<dbReference type="GO" id="GO:0002250">
    <property type="term" value="P:adaptive immune response"/>
    <property type="evidence" value="ECO:0007669"/>
    <property type="project" value="UniProtKB-KW"/>
</dbReference>
<dbReference type="GO" id="GO:0050851">
    <property type="term" value="P:antigen receptor-mediated signaling pathway"/>
    <property type="evidence" value="ECO:0000318"/>
    <property type="project" value="GO_Central"/>
</dbReference>
<dbReference type="GO" id="GO:0042113">
    <property type="term" value="P:B cell activation"/>
    <property type="evidence" value="ECO:0000314"/>
    <property type="project" value="HGNC-UCL"/>
</dbReference>
<dbReference type="GO" id="GO:0006955">
    <property type="term" value="P:immune response"/>
    <property type="evidence" value="ECO:0000314"/>
    <property type="project" value="HGNC-UCL"/>
</dbReference>
<dbReference type="GO" id="GO:0035556">
    <property type="term" value="P:intracellular signal transduction"/>
    <property type="evidence" value="ECO:0000314"/>
    <property type="project" value="HGNC-UCL"/>
</dbReference>
<dbReference type="GO" id="GO:0046649">
    <property type="term" value="P:lymphocyte activation"/>
    <property type="evidence" value="ECO:0000318"/>
    <property type="project" value="GO_Central"/>
</dbReference>
<dbReference type="GO" id="GO:0043409">
    <property type="term" value="P:negative regulation of MAPK cascade"/>
    <property type="evidence" value="ECO:0000315"/>
    <property type="project" value="HGNC-UCL"/>
</dbReference>
<dbReference type="GO" id="GO:0050868">
    <property type="term" value="P:negative regulation of T cell activation"/>
    <property type="evidence" value="ECO:0000314"/>
    <property type="project" value="HGNC-UCL"/>
</dbReference>
<dbReference type="InterPro" id="IPR031393">
    <property type="entry name" value="LAX"/>
</dbReference>
<dbReference type="PANTHER" id="PTHR24091">
    <property type="entry name" value="LYMPHOCYTE TRANSMEMBRANE ADAPTER 1"/>
    <property type="match status" value="1"/>
</dbReference>
<dbReference type="PANTHER" id="PTHR24091:SF0">
    <property type="entry name" value="LYMPHOCYTE TRANSMEMBRANE ADAPTER 1"/>
    <property type="match status" value="1"/>
</dbReference>
<dbReference type="Pfam" id="PF15681">
    <property type="entry name" value="LAX"/>
    <property type="match status" value="1"/>
</dbReference>
<protein>
    <recommendedName>
        <fullName>Lymphocyte transmembrane adapter 1</fullName>
    </recommendedName>
    <alternativeName>
        <fullName>Linker for activation of X cells</fullName>
    </alternativeName>
    <alternativeName>
        <fullName>Membrane-associated adapter protein LAX</fullName>
    </alternativeName>
</protein>
<evidence type="ECO:0000255" key="1"/>
<evidence type="ECO:0000256" key="2">
    <source>
        <dbReference type="SAM" id="MobiDB-lite"/>
    </source>
</evidence>
<evidence type="ECO:0000269" key="3">
    <source>
    </source>
</evidence>
<evidence type="ECO:0000269" key="4">
    <source>
    </source>
</evidence>
<evidence type="ECO:0000303" key="5">
    <source>
    </source>
</evidence>
<evidence type="ECO:0000305" key="6"/>
<evidence type="ECO:0007744" key="7">
    <source>
    </source>
</evidence>
<name>LAX1_HUMAN</name>
<gene>
    <name type="primary">LAX1</name>
    <name type="synonym">LAX</name>
</gene>
<comment type="function">
    <text evidence="3">Negatively regulates TCR (T-cell antigen receptor)-mediated signaling in T-cells and BCR (B-cell antigen receptor)-mediated signaling in B-cells.</text>
</comment>
<comment type="subunit">
    <text evidence="3">When phosphorylated, interacts with GRB2, PIK3R1 and GRAP2.</text>
</comment>
<comment type="interaction">
    <interactant intactId="EBI-10232942">
        <id>Q8IWV1</id>
    </interactant>
    <interactant intactId="EBI-970191">
        <id>Q14451</id>
        <label>GRB7</label>
    </interactant>
    <organismsDiffer>false</organismsDiffer>
    <experiments>4</experiments>
</comment>
<comment type="interaction">
    <interactant intactId="EBI-10232942">
        <id>Q8IWV1</id>
    </interactant>
    <interactant intactId="EBI-745021">
        <id>Q96FJ0</id>
        <label>STAMBPL1</label>
    </interactant>
    <organismsDiffer>false</organismsDiffer>
    <experiments>3</experiments>
</comment>
<comment type="interaction">
    <interactant intactId="EBI-12327415">
        <id>Q8IWV1-3</id>
    </interactant>
    <interactant intactId="EBI-11991632">
        <id>Q14451-3</id>
        <label>GRB7</label>
    </interactant>
    <organismsDiffer>false</organismsDiffer>
    <experiments>3</experiments>
</comment>
<comment type="subcellular location">
    <subcellularLocation>
        <location evidence="3">Cell membrane</location>
        <topology evidence="3">Single-pass type III membrane protein</topology>
    </subcellularLocation>
</comment>
<comment type="alternative products">
    <event type="alternative splicing"/>
    <isoform>
        <id>Q8IWV1-1</id>
        <name>1</name>
        <sequence type="displayed"/>
    </isoform>
    <isoform>
        <id>Q8IWV1-2</id>
        <name>2</name>
        <sequence type="described" ref="VSP_016641"/>
    </isoform>
    <isoform>
        <id>Q8IWV1-3</id>
        <name>3</name>
        <sequence type="described" ref="VSP_046972"/>
    </isoform>
</comment>
<comment type="tissue specificity">
    <text evidence="3">Expressed in spleen, thymus, and peripheral blood leukocytes. Expressed in several B-, T-, NK and monocyte cell lines.</text>
</comment>
<comment type="induction">
    <text evidence="4">Up-regulated in T-cells following TCR engagement.</text>
</comment>
<comment type="PTM">
    <text evidence="3">Phosphorylated on tyrosines by Syk, Lck or ZAP70 upon TCR or BCR activation; which leads to the recruitment of GRB2, PIK3R1 and GRAP2.</text>
</comment>
<comment type="sequence caution" evidence="6">
    <conflict type="erroneous initiation">
        <sequence resource="EMBL-CDS" id="AAH69650"/>
    </conflict>
</comment>
<accession>Q8IWV1</accession>
<accession>B7Z744</accession>
<accession>J3KP69</accession>
<accession>Q6NSZ6</accession>
<accession>Q9NXB4</accession>